<name>AURK_CANGA</name>
<organism>
    <name type="scientific">Candida glabrata (strain ATCC 2001 / BCRC 20586 / JCM 3761 / NBRC 0622 / NRRL Y-65 / CBS 138)</name>
    <name type="common">Yeast</name>
    <name type="synonym">Nakaseomyces glabratus</name>
    <dbReference type="NCBI Taxonomy" id="284593"/>
    <lineage>
        <taxon>Eukaryota</taxon>
        <taxon>Fungi</taxon>
        <taxon>Dikarya</taxon>
        <taxon>Ascomycota</taxon>
        <taxon>Saccharomycotina</taxon>
        <taxon>Saccharomycetes</taxon>
        <taxon>Saccharomycetales</taxon>
        <taxon>Saccharomycetaceae</taxon>
        <taxon>Nakaseomyces</taxon>
    </lineage>
</organism>
<sequence length="358" mass="40992">MENKATLARNIGEKRVSPRSKVNGTGKSWRISYSPQRMDGVSSGRNVSKIPSPVRERLFLKNQERKPLGVSPLSNLSPNSLGRNSLEKSTYNNKLSLKDFEVGRKLGKGKFGKVYCVRHKKSGFICALKAIEKNEILQFNLLKQLKREVDIQLGMDHPNIIKLYAHFHDEKRVYLLMEHSINGELYKSLKNNGPFNDVLASHYIYQIADALHYMHKKRIIHRDVKPENVLIGFDNVVKLADFGWSILNPEGSKRKTLCGTIDYLSPEMITPREYDEQVDVWALGVLAYELVVGVPPFEENSKELTYKRILKCDLNFPESISKDAKDLISKLLVTDTTQRLSLTGVKTHPWILKNKPFW</sequence>
<feature type="chain" id="PRO_0000086026" description="Aurora kinase">
    <location>
        <begin position="1"/>
        <end position="358"/>
    </location>
</feature>
<feature type="domain" description="Protein kinase" evidence="4">
    <location>
        <begin position="100"/>
        <end position="358"/>
    </location>
</feature>
<feature type="region of interest" description="Disordered" evidence="6">
    <location>
        <begin position="1"/>
        <end position="49"/>
    </location>
</feature>
<feature type="compositionally biased region" description="Polar residues" evidence="6">
    <location>
        <begin position="20"/>
        <end position="35"/>
    </location>
</feature>
<feature type="active site" description="Proton acceptor" evidence="4 5">
    <location>
        <position position="223"/>
    </location>
</feature>
<feature type="binding site" evidence="4">
    <location>
        <begin position="106"/>
        <end position="114"/>
    </location>
    <ligand>
        <name>ATP</name>
        <dbReference type="ChEBI" id="CHEBI:30616"/>
    </ligand>
</feature>
<feature type="binding site" evidence="4">
    <location>
        <position position="129"/>
    </location>
    <ligand>
        <name>ATP</name>
        <dbReference type="ChEBI" id="CHEBI:30616"/>
    </ligand>
</feature>
<comment type="function">
    <text evidence="3">Component of the chromosomal passenger complex (CPC), a complex that acts as a key regulator of chromosome segregation and cytokinesis. Has a role in error-correction of aberrent kinetochore-microtubule attachments to ensure that sister kinetochores become bioriented and connect to opposite poles by promoting spindle assembly checkpoint signaling.</text>
</comment>
<comment type="catalytic activity">
    <reaction evidence="2">
        <text>L-seryl-[protein] + ATP = O-phospho-L-seryl-[protein] + ADP + H(+)</text>
        <dbReference type="Rhea" id="RHEA:17989"/>
        <dbReference type="Rhea" id="RHEA-COMP:9863"/>
        <dbReference type="Rhea" id="RHEA-COMP:11604"/>
        <dbReference type="ChEBI" id="CHEBI:15378"/>
        <dbReference type="ChEBI" id="CHEBI:29999"/>
        <dbReference type="ChEBI" id="CHEBI:30616"/>
        <dbReference type="ChEBI" id="CHEBI:83421"/>
        <dbReference type="ChEBI" id="CHEBI:456216"/>
        <dbReference type="EC" id="2.7.11.1"/>
    </reaction>
</comment>
<comment type="catalytic activity">
    <reaction>
        <text>L-threonyl-[protein] + ATP = O-phospho-L-threonyl-[protein] + ADP + H(+)</text>
        <dbReference type="Rhea" id="RHEA:46608"/>
        <dbReference type="Rhea" id="RHEA-COMP:11060"/>
        <dbReference type="Rhea" id="RHEA-COMP:11605"/>
        <dbReference type="ChEBI" id="CHEBI:15378"/>
        <dbReference type="ChEBI" id="CHEBI:30013"/>
        <dbReference type="ChEBI" id="CHEBI:30616"/>
        <dbReference type="ChEBI" id="CHEBI:61977"/>
        <dbReference type="ChEBI" id="CHEBI:456216"/>
        <dbReference type="EC" id="2.7.11.1"/>
    </reaction>
</comment>
<comment type="subcellular location">
    <subcellularLocation>
        <location evidence="1">Nucleus</location>
    </subcellularLocation>
    <subcellularLocation>
        <location evidence="1">Cytoplasm</location>
        <location evidence="1">Cytoskeleton</location>
        <location evidence="1">Spindle</location>
    </subcellularLocation>
    <subcellularLocation>
        <location evidence="1">Chromosome</location>
        <location evidence="1">Centromere</location>
        <location evidence="1">Kinetochore</location>
    </subcellularLocation>
    <text evidence="1">Associates with the mitotic spindle and on elongated and disassembling spindles. Also associated with the kinetochore (By similarity).</text>
</comment>
<comment type="similarity">
    <text evidence="4">Belongs to the protein kinase superfamily. Ser/Thr protein kinase family. Aurora subfamily.</text>
</comment>
<keyword id="KW-0067">ATP-binding</keyword>
<keyword id="KW-0131">Cell cycle</keyword>
<keyword id="KW-0137">Centromere</keyword>
<keyword id="KW-0158">Chromosome</keyword>
<keyword id="KW-0159">Chromosome partition</keyword>
<keyword id="KW-0963">Cytoplasm</keyword>
<keyword id="KW-0206">Cytoskeleton</keyword>
<keyword id="KW-0418">Kinase</keyword>
<keyword id="KW-0995">Kinetochore</keyword>
<keyword id="KW-0547">Nucleotide-binding</keyword>
<keyword id="KW-0539">Nucleus</keyword>
<keyword id="KW-1185">Reference proteome</keyword>
<keyword id="KW-0723">Serine/threonine-protein kinase</keyword>
<keyword id="KW-0808">Transferase</keyword>
<reference key="1">
    <citation type="journal article" date="2004" name="Nature">
        <title>Genome evolution in yeasts.</title>
        <authorList>
            <person name="Dujon B."/>
            <person name="Sherman D."/>
            <person name="Fischer G."/>
            <person name="Durrens P."/>
            <person name="Casaregola S."/>
            <person name="Lafontaine I."/>
            <person name="de Montigny J."/>
            <person name="Marck C."/>
            <person name="Neuveglise C."/>
            <person name="Talla E."/>
            <person name="Goffard N."/>
            <person name="Frangeul L."/>
            <person name="Aigle M."/>
            <person name="Anthouard V."/>
            <person name="Babour A."/>
            <person name="Barbe V."/>
            <person name="Barnay S."/>
            <person name="Blanchin S."/>
            <person name="Beckerich J.-M."/>
            <person name="Beyne E."/>
            <person name="Bleykasten C."/>
            <person name="Boisrame A."/>
            <person name="Boyer J."/>
            <person name="Cattolico L."/>
            <person name="Confanioleri F."/>
            <person name="de Daruvar A."/>
            <person name="Despons L."/>
            <person name="Fabre E."/>
            <person name="Fairhead C."/>
            <person name="Ferry-Dumazet H."/>
            <person name="Groppi A."/>
            <person name="Hantraye F."/>
            <person name="Hennequin C."/>
            <person name="Jauniaux N."/>
            <person name="Joyet P."/>
            <person name="Kachouri R."/>
            <person name="Kerrest A."/>
            <person name="Koszul R."/>
            <person name="Lemaire M."/>
            <person name="Lesur I."/>
            <person name="Ma L."/>
            <person name="Muller H."/>
            <person name="Nicaud J.-M."/>
            <person name="Nikolski M."/>
            <person name="Oztas S."/>
            <person name="Ozier-Kalogeropoulos O."/>
            <person name="Pellenz S."/>
            <person name="Potier S."/>
            <person name="Richard G.-F."/>
            <person name="Straub M.-L."/>
            <person name="Suleau A."/>
            <person name="Swennen D."/>
            <person name="Tekaia F."/>
            <person name="Wesolowski-Louvel M."/>
            <person name="Westhof E."/>
            <person name="Wirth B."/>
            <person name="Zeniou-Meyer M."/>
            <person name="Zivanovic Y."/>
            <person name="Bolotin-Fukuhara M."/>
            <person name="Thierry A."/>
            <person name="Bouchier C."/>
            <person name="Caudron B."/>
            <person name="Scarpelli C."/>
            <person name="Gaillardin C."/>
            <person name="Weissenbach J."/>
            <person name="Wincker P."/>
            <person name="Souciet J.-L."/>
        </authorList>
    </citation>
    <scope>NUCLEOTIDE SEQUENCE [LARGE SCALE GENOMIC DNA]</scope>
    <source>
        <strain>ATCC 2001 / BCRC 20586 / JCM 3761 / NBRC 0622 / NRRL Y-65 / CBS 138</strain>
    </source>
</reference>
<proteinExistence type="inferred from homology"/>
<gene>
    <name type="primary">IPL1</name>
    <name type="ordered locus">CAGL0E05720g</name>
</gene>
<evidence type="ECO:0000250" key="1"/>
<evidence type="ECO:0000250" key="2">
    <source>
        <dbReference type="UniProtKB" id="D6W3G1"/>
    </source>
</evidence>
<evidence type="ECO:0000250" key="3">
    <source>
        <dbReference type="UniProtKB" id="P38991"/>
    </source>
</evidence>
<evidence type="ECO:0000255" key="4">
    <source>
        <dbReference type="PROSITE-ProRule" id="PRU00159"/>
    </source>
</evidence>
<evidence type="ECO:0000255" key="5">
    <source>
        <dbReference type="PROSITE-ProRule" id="PRU10027"/>
    </source>
</evidence>
<evidence type="ECO:0000256" key="6">
    <source>
        <dbReference type="SAM" id="MobiDB-lite"/>
    </source>
</evidence>
<protein>
    <recommendedName>
        <fullName>Aurora kinase</fullName>
        <ecNumber evidence="3">2.7.11.1</ecNumber>
    </recommendedName>
    <alternativeName>
        <fullName>Spindle assembly checkpoint kinase</fullName>
    </alternativeName>
</protein>
<dbReference type="EC" id="2.7.11.1" evidence="3"/>
<dbReference type="EMBL" id="CR380951">
    <property type="protein sequence ID" value="CAG58856.1"/>
    <property type="molecule type" value="Genomic_DNA"/>
</dbReference>
<dbReference type="RefSeq" id="XP_445937.1">
    <property type="nucleotide sequence ID" value="XM_445937.1"/>
</dbReference>
<dbReference type="SMR" id="Q6FV07"/>
<dbReference type="FunCoup" id="Q6FV07">
    <property type="interactions" value="1180"/>
</dbReference>
<dbReference type="STRING" id="284593.Q6FV07"/>
<dbReference type="EnsemblFungi" id="CAGL0E05720g-T">
    <property type="protein sequence ID" value="CAGL0E05720g-T-p1"/>
    <property type="gene ID" value="CAGL0E05720g"/>
</dbReference>
<dbReference type="KEGG" id="cgr:2887534"/>
<dbReference type="CGD" id="CAL0128618">
    <property type="gene designation" value="CAGL0E05720g"/>
</dbReference>
<dbReference type="VEuPathDB" id="FungiDB:CAGL0E05720g"/>
<dbReference type="eggNOG" id="KOG0580">
    <property type="taxonomic scope" value="Eukaryota"/>
</dbReference>
<dbReference type="HOGENOM" id="CLU_000288_63_6_1"/>
<dbReference type="InParanoid" id="Q6FV07"/>
<dbReference type="OMA" id="ESRFPEW"/>
<dbReference type="Proteomes" id="UP000002428">
    <property type="component" value="Chromosome E"/>
</dbReference>
<dbReference type="GO" id="GO:0032133">
    <property type="term" value="C:chromosome passenger complex"/>
    <property type="evidence" value="ECO:0007669"/>
    <property type="project" value="EnsemblFungi"/>
</dbReference>
<dbReference type="GO" id="GO:0005737">
    <property type="term" value="C:cytoplasm"/>
    <property type="evidence" value="ECO:0007669"/>
    <property type="project" value="UniProtKB-KW"/>
</dbReference>
<dbReference type="GO" id="GO:0000776">
    <property type="term" value="C:kinetochore"/>
    <property type="evidence" value="ECO:0007669"/>
    <property type="project" value="UniProtKB-KW"/>
</dbReference>
<dbReference type="GO" id="GO:0005828">
    <property type="term" value="C:kinetochore microtubule"/>
    <property type="evidence" value="ECO:0007669"/>
    <property type="project" value="EnsemblFungi"/>
</dbReference>
<dbReference type="GO" id="GO:0005634">
    <property type="term" value="C:nucleus"/>
    <property type="evidence" value="ECO:0007669"/>
    <property type="project" value="UniProtKB-SubCell"/>
</dbReference>
<dbReference type="GO" id="GO:0051233">
    <property type="term" value="C:spindle midzone"/>
    <property type="evidence" value="ECO:0007669"/>
    <property type="project" value="EnsemblFungi"/>
</dbReference>
<dbReference type="GO" id="GO:0005524">
    <property type="term" value="F:ATP binding"/>
    <property type="evidence" value="ECO:0007669"/>
    <property type="project" value="UniProtKB-KW"/>
</dbReference>
<dbReference type="GO" id="GO:0106310">
    <property type="term" value="F:protein serine kinase activity"/>
    <property type="evidence" value="ECO:0007669"/>
    <property type="project" value="RHEA"/>
</dbReference>
<dbReference type="GO" id="GO:0004674">
    <property type="term" value="F:protein serine/threonine kinase activity"/>
    <property type="evidence" value="ECO:0007669"/>
    <property type="project" value="UniProtKB-KW"/>
</dbReference>
<dbReference type="GO" id="GO:0008608">
    <property type="term" value="P:attachment of spindle microtubules to kinetochore"/>
    <property type="evidence" value="ECO:0007669"/>
    <property type="project" value="EnsemblFungi"/>
</dbReference>
<dbReference type="GO" id="GO:0045143">
    <property type="term" value="P:homologous chromosome segregation"/>
    <property type="evidence" value="ECO:0007669"/>
    <property type="project" value="EnsemblFungi"/>
</dbReference>
<dbReference type="GO" id="GO:0045144">
    <property type="term" value="P:meiotic sister chromatid segregation"/>
    <property type="evidence" value="ECO:0007669"/>
    <property type="project" value="EnsemblFungi"/>
</dbReference>
<dbReference type="GO" id="GO:0044779">
    <property type="term" value="P:meiotic spindle checkpoint signaling"/>
    <property type="evidence" value="ECO:0007669"/>
    <property type="project" value="EnsemblFungi"/>
</dbReference>
<dbReference type="GO" id="GO:0044774">
    <property type="term" value="P:mitotic DNA integrity checkpoint signaling"/>
    <property type="evidence" value="ECO:0007669"/>
    <property type="project" value="EnsemblFungi"/>
</dbReference>
<dbReference type="GO" id="GO:0051228">
    <property type="term" value="P:mitotic spindle disassembly"/>
    <property type="evidence" value="ECO:0007669"/>
    <property type="project" value="EnsemblFungi"/>
</dbReference>
<dbReference type="GO" id="GO:1901925">
    <property type="term" value="P:negative regulation of protein import into nucleus during spindle assembly checkpoint"/>
    <property type="evidence" value="ECO:0007669"/>
    <property type="project" value="EnsemblFungi"/>
</dbReference>
<dbReference type="GO" id="GO:0032465">
    <property type="term" value="P:regulation of cytokinesis"/>
    <property type="evidence" value="ECO:0007669"/>
    <property type="project" value="EnsemblFungi"/>
</dbReference>
<dbReference type="GO" id="GO:0090266">
    <property type="term" value="P:regulation of mitotic cell cycle spindle assembly checkpoint"/>
    <property type="evidence" value="ECO:0007669"/>
    <property type="project" value="EnsemblFungi"/>
</dbReference>
<dbReference type="GO" id="GO:1901673">
    <property type="term" value="P:regulation of mitotic spindle assembly"/>
    <property type="evidence" value="ECO:0007669"/>
    <property type="project" value="EnsemblFungi"/>
</dbReference>
<dbReference type="CDD" id="cd14007">
    <property type="entry name" value="STKc_Aurora"/>
    <property type="match status" value="1"/>
</dbReference>
<dbReference type="FunFam" id="3.30.200.20:FF:000042">
    <property type="entry name" value="Aurora kinase A"/>
    <property type="match status" value="1"/>
</dbReference>
<dbReference type="FunFam" id="1.10.510.10:FF:000235">
    <property type="entry name" value="Serine/threonine-protein kinase ark1"/>
    <property type="match status" value="1"/>
</dbReference>
<dbReference type="Gene3D" id="1.10.510.10">
    <property type="entry name" value="Transferase(Phosphotransferase) domain 1"/>
    <property type="match status" value="1"/>
</dbReference>
<dbReference type="InterPro" id="IPR030616">
    <property type="entry name" value="Aur-like"/>
</dbReference>
<dbReference type="InterPro" id="IPR011009">
    <property type="entry name" value="Kinase-like_dom_sf"/>
</dbReference>
<dbReference type="InterPro" id="IPR000719">
    <property type="entry name" value="Prot_kinase_dom"/>
</dbReference>
<dbReference type="InterPro" id="IPR017441">
    <property type="entry name" value="Protein_kinase_ATP_BS"/>
</dbReference>
<dbReference type="InterPro" id="IPR008271">
    <property type="entry name" value="Ser/Thr_kinase_AS"/>
</dbReference>
<dbReference type="PANTHER" id="PTHR24350">
    <property type="entry name" value="SERINE/THREONINE-PROTEIN KINASE IAL-RELATED"/>
    <property type="match status" value="1"/>
</dbReference>
<dbReference type="Pfam" id="PF00069">
    <property type="entry name" value="Pkinase"/>
    <property type="match status" value="1"/>
</dbReference>
<dbReference type="SMART" id="SM00220">
    <property type="entry name" value="S_TKc"/>
    <property type="match status" value="1"/>
</dbReference>
<dbReference type="SUPFAM" id="SSF56112">
    <property type="entry name" value="Protein kinase-like (PK-like)"/>
    <property type="match status" value="1"/>
</dbReference>
<dbReference type="PROSITE" id="PS00107">
    <property type="entry name" value="PROTEIN_KINASE_ATP"/>
    <property type="match status" value="1"/>
</dbReference>
<dbReference type="PROSITE" id="PS50011">
    <property type="entry name" value="PROTEIN_KINASE_DOM"/>
    <property type="match status" value="1"/>
</dbReference>
<dbReference type="PROSITE" id="PS00108">
    <property type="entry name" value="PROTEIN_KINASE_ST"/>
    <property type="match status" value="1"/>
</dbReference>
<accession>Q6FV07</accession>